<reference key="1">
    <citation type="journal article" date="1991" name="Cell">
        <title>Colony-stimulating factor 1 regulates novel cyclins during the G1 phase of the cell cycle.</title>
        <authorList>
            <person name="Matsushime H."/>
            <person name="Roussel M.F."/>
            <person name="Ashmun R.A."/>
            <person name="Sherr C.J."/>
        </authorList>
    </citation>
    <scope>NUCLEOTIDE SEQUENCE [MRNA]</scope>
</reference>
<reference key="2">
    <citation type="journal article" date="1996" name="Genomics">
        <title>Characterization of the mouse cyclin D3 gene: exon/intron organization and promoter activity.</title>
        <authorList>
            <person name="Wang Z."/>
            <person name="Sicinski P."/>
            <person name="Weinberg R.A."/>
            <person name="Zhang Y."/>
            <person name="Ravid K."/>
        </authorList>
    </citation>
    <scope>NUCLEOTIDE SEQUENCE [GENOMIC DNA]</scope>
    <source>
        <strain>129/Sv</strain>
    </source>
</reference>
<reference key="3">
    <citation type="journal article" date="2004" name="Genome Res.">
        <title>The status, quality, and expansion of the NIH full-length cDNA project: the Mammalian Gene Collection (MGC).</title>
        <authorList>
            <consortium name="The MGC Project Team"/>
        </authorList>
    </citation>
    <scope>NUCLEOTIDE SEQUENCE [LARGE SCALE MRNA]</scope>
    <source>
        <strain>C57BL/6J</strain>
        <tissue>Mammary gland</tissue>
    </source>
</reference>
<reference key="4">
    <citation type="journal article" date="2010" name="Cell">
        <title>A tissue-specific atlas of mouse protein phosphorylation and expression.</title>
        <authorList>
            <person name="Huttlin E.L."/>
            <person name="Jedrychowski M.P."/>
            <person name="Elias J.E."/>
            <person name="Goswami T."/>
            <person name="Rad R."/>
            <person name="Beausoleil S.A."/>
            <person name="Villen J."/>
            <person name="Haas W."/>
            <person name="Sowa M.E."/>
            <person name="Gygi S.P."/>
        </authorList>
    </citation>
    <scope>PHOSPHORYLATION [LARGE SCALE ANALYSIS] AT SER-264</scope>
    <scope>IDENTIFICATION BY MASS SPECTROMETRY [LARGE SCALE ANALYSIS]</scope>
    <source>
        <tissue>Pancreas</tissue>
        <tissue>Spleen</tissue>
    </source>
</reference>
<reference key="5">
    <citation type="journal article" date="2021" name="Nature">
        <title>AMBRA1 regulates cyclin D to guard S-phase entry and genomic integrity.</title>
        <authorList>
            <person name="Maiani E."/>
            <person name="Milletti G."/>
            <person name="Nazio F."/>
            <person name="Holdgaard S.G."/>
            <person name="Bartkova J."/>
            <person name="Rizza S."/>
            <person name="Cianfanelli V."/>
            <person name="Lorente M."/>
            <person name="Simoneschi D."/>
            <person name="Di Marco M."/>
            <person name="D'Acunzo P."/>
            <person name="Di Leo L."/>
            <person name="Rasmussen R."/>
            <person name="Montagna C."/>
            <person name="Raciti M."/>
            <person name="De Stefanis C."/>
            <person name="Gabicagogeascoa E."/>
            <person name="Rona G."/>
            <person name="Salvador N."/>
            <person name="Pupo E."/>
            <person name="Merchut-Maya J.M."/>
            <person name="Daniel C.J."/>
            <person name="Carinci M."/>
            <person name="Cesarini V."/>
            <person name="O'sullivan A."/>
            <person name="Jeong Y.T."/>
            <person name="Bordi M."/>
            <person name="Russo F."/>
            <person name="Campello S."/>
            <person name="Gallo A."/>
            <person name="Filomeni G."/>
            <person name="Lanzetti L."/>
            <person name="Sears R.C."/>
            <person name="Hamerlik P."/>
            <person name="Bartolazzi A."/>
            <person name="Hynds R.E."/>
            <person name="Pearce D.R."/>
            <person name="Swanton C."/>
            <person name="Pagano M."/>
            <person name="Velasco G."/>
            <person name="Papaleo E."/>
            <person name="De Zio D."/>
            <person name="Maya-Mendoza A."/>
            <person name="Locatelli F."/>
            <person name="Bartek J."/>
            <person name="Cecconi F."/>
        </authorList>
    </citation>
    <scope>UBIQUITINATION</scope>
</reference>
<reference key="6">
    <citation type="journal article" date="2021" name="Nature">
        <title>CRL4AMBRA1 is a master regulator of D-type cyclins.</title>
        <authorList>
            <person name="Simoneschi D."/>
            <person name="Rona G."/>
            <person name="Zhou N."/>
            <person name="Jeong Y.T."/>
            <person name="Jiang S."/>
            <person name="Milletti G."/>
            <person name="Arbini A.A."/>
            <person name="O'Sullivan A."/>
            <person name="Wang A.A."/>
            <person name="Nithikasem S."/>
            <person name="Keegan S."/>
            <person name="Siu Y."/>
            <person name="Cianfanelli V."/>
            <person name="Maiani E."/>
            <person name="Nazio F."/>
            <person name="Cecconi F."/>
            <person name="Boccalatte F."/>
            <person name="Fenyoe D."/>
            <person name="Jones D.R."/>
            <person name="Busino L."/>
            <person name="Pagano M."/>
        </authorList>
    </citation>
    <scope>UBIQUITINATION</scope>
</reference>
<protein>
    <recommendedName>
        <fullName evidence="7">G1/S-specific cyclin-D3</fullName>
    </recommendedName>
</protein>
<comment type="function">
    <text evidence="2">Regulatory component of the cyclin D3-CDK4 (DC) complex that phosphorylates and inhibits members of the retinoblastoma (RB) protein family including RB1 and regulates the cell-cycle during G(1)/S transition. Phosphorylation of RB1 allows dissociation of the transcription factor E2F from the RB/E2F complex and the subsequent transcription of E2F target genes which are responsible for the progression through the G(1) phase. Hypophosphorylates RB1 in early G(1) phase. Cyclin D-CDK4 complexes are major integrators of various mitogenenic and antimitogenic signals. Component of the ternary complex, cyclin D3/CDK4/CDKN1B, required for nuclear translocation and activity of the cyclin D-CDK4 complex. Shows transcriptional coactivator activity with ATF5 independently of CDK4.</text>
</comment>
<comment type="subunit">
    <text evidence="2">Interacts with the CDK4 and CDK6 protein kinases to form a serine/threonine kinase holoenzyme complex. The cyclin subunit imparts substrate specificity to the complex. Interacts with ATF5. Interacts with EIF3K. Component of the ternary complex cyclin D/CDK4/CDKN1B required for nuclear translocation and modulation of CDK4-mediated kinase activity. Can form similar complexes with either CDKN1A or CDKN2A.</text>
</comment>
<comment type="interaction">
    <interactant intactId="EBI-847337">
        <id>P30282</id>
    </interactant>
    <interactant intactId="EBI-847380">
        <id>Q64261</id>
        <label>Cdk6</label>
    </interactant>
    <organismsDiffer>false</organismsDiffer>
    <experiments>2</experiments>
</comment>
<comment type="subcellular location">
    <subcellularLocation>
        <location evidence="2">Nucleus</location>
    </subcellularLocation>
    <subcellularLocation>
        <location evidence="2">Cytoplasm</location>
    </subcellularLocation>
</comment>
<comment type="PTM">
    <text evidence="1">Phosphorylation at Thr-283 by MAP kinases is required for ubiquitination and degradation by the DCX(AMBRA1) complex.</text>
</comment>
<comment type="PTM">
    <text evidence="2 4 5">Ubiquitinated by the DCX(AMBRA1) complex during the transition from G1 to S cell phase, leading to its degradation: ubiquitination is dependent on Thr-283 phosphorylation (PubMed:33854232, PubMed:33854235). The DCX(AMBRA1) complex represents the major regulator of CCND3 stability during the G1/S transition (PubMed:33854232, PubMed:33854235). Polyubiquitinated by the SCF(FBXL2) complex, leading to proteasomal degradation (By similarity).</text>
</comment>
<comment type="similarity">
    <text evidence="8">Belongs to the cyclin family. Cyclin D subfamily.</text>
</comment>
<dbReference type="EMBL" id="M86183">
    <property type="protein sequence ID" value="AAA37504.1"/>
    <property type="molecule type" value="mRNA"/>
</dbReference>
<dbReference type="EMBL" id="U43844">
    <property type="protein sequence ID" value="AAC53363.1"/>
    <property type="molecule type" value="Genomic_DNA"/>
</dbReference>
<dbReference type="EMBL" id="BC004076">
    <property type="protein sequence ID" value="AAH04076.1"/>
    <property type="molecule type" value="mRNA"/>
</dbReference>
<dbReference type="EMBL" id="BC005605">
    <property type="protein sequence ID" value="AAH05605.1"/>
    <property type="molecule type" value="mRNA"/>
</dbReference>
<dbReference type="CCDS" id="CCDS28850.1"/>
<dbReference type="PIR" id="C40035">
    <property type="entry name" value="C40035"/>
</dbReference>
<dbReference type="RefSeq" id="NP_001075104.1">
    <property type="nucleotide sequence ID" value="NM_001081635.1"/>
</dbReference>
<dbReference type="RefSeq" id="NP_001075105.1">
    <property type="nucleotide sequence ID" value="NM_001081636.1"/>
</dbReference>
<dbReference type="RefSeq" id="NP_031658.1">
    <property type="nucleotide sequence ID" value="NM_007632.2"/>
</dbReference>
<dbReference type="SMR" id="P30282"/>
<dbReference type="BioGRID" id="198550">
    <property type="interactions" value="12"/>
</dbReference>
<dbReference type="ComplexPortal" id="CPX-2077">
    <property type="entry name" value="Cyclin D3-CDK4 complex"/>
</dbReference>
<dbReference type="ComplexPortal" id="CPX-2079">
    <property type="entry name" value="Cyclin D3-CDK6 complex"/>
</dbReference>
<dbReference type="FunCoup" id="P30282">
    <property type="interactions" value="1523"/>
</dbReference>
<dbReference type="IntAct" id="P30282">
    <property type="interactions" value="6"/>
</dbReference>
<dbReference type="STRING" id="10090.ENSMUSP00000126141"/>
<dbReference type="iPTMnet" id="P30282"/>
<dbReference type="PhosphoSitePlus" id="P30282"/>
<dbReference type="jPOST" id="P30282"/>
<dbReference type="PaxDb" id="10090-ENSMUSP00000040488"/>
<dbReference type="PeptideAtlas" id="P30282"/>
<dbReference type="ProteomicsDB" id="281251"/>
<dbReference type="Pumba" id="P30282"/>
<dbReference type="Antibodypedia" id="3521">
    <property type="antibodies" value="822 antibodies from 45 providers"/>
</dbReference>
<dbReference type="DNASU" id="12445"/>
<dbReference type="Ensembl" id="ENSMUST00000037333.17">
    <property type="protein sequence ID" value="ENSMUSP00000040488.10"/>
    <property type="gene ID" value="ENSMUSG00000034165.17"/>
</dbReference>
<dbReference type="Ensembl" id="ENSMUST00000171031.8">
    <property type="protein sequence ID" value="ENSMUSP00000126141.2"/>
    <property type="gene ID" value="ENSMUSG00000034165.17"/>
</dbReference>
<dbReference type="Ensembl" id="ENSMUST00000182209.8">
    <property type="protein sequence ID" value="ENSMUSP00000138091.2"/>
    <property type="gene ID" value="ENSMUSG00000034165.17"/>
</dbReference>
<dbReference type="Ensembl" id="ENSMUST00000183044.8">
    <property type="protein sequence ID" value="ENSMUSP00000138220.2"/>
    <property type="gene ID" value="ENSMUSG00000034165.17"/>
</dbReference>
<dbReference type="Ensembl" id="ENSMUST00000183177.8">
    <property type="protein sequence ID" value="ENSMUSP00000138640.2"/>
    <property type="gene ID" value="ENSMUSG00000034165.17"/>
</dbReference>
<dbReference type="GeneID" id="12445"/>
<dbReference type="KEGG" id="mmu:12445"/>
<dbReference type="UCSC" id="uc008cvk.1">
    <property type="organism name" value="mouse"/>
</dbReference>
<dbReference type="AGR" id="MGI:88315"/>
<dbReference type="CTD" id="896"/>
<dbReference type="MGI" id="MGI:88315">
    <property type="gene designation" value="Ccnd3"/>
</dbReference>
<dbReference type="VEuPathDB" id="HostDB:ENSMUSG00000034165"/>
<dbReference type="eggNOG" id="KOG0656">
    <property type="taxonomic scope" value="Eukaryota"/>
</dbReference>
<dbReference type="GeneTree" id="ENSGT00940000160743"/>
<dbReference type="InParanoid" id="P30282"/>
<dbReference type="OMA" id="KEIKPYM"/>
<dbReference type="OrthoDB" id="306099at2759"/>
<dbReference type="PhylomeDB" id="P30282"/>
<dbReference type="TreeFam" id="TF101004"/>
<dbReference type="Reactome" id="R-MMU-5687128">
    <property type="pathway name" value="MAPK6/MAPK4 signaling"/>
</dbReference>
<dbReference type="Reactome" id="R-MMU-69231">
    <property type="pathway name" value="Cyclin D associated events in G1"/>
</dbReference>
<dbReference type="Reactome" id="R-MMU-8934593">
    <property type="pathway name" value="Regulation of RUNX1 Expression and Activity"/>
</dbReference>
<dbReference type="Reactome" id="R-MMU-9754119">
    <property type="pathway name" value="Drug-mediated inhibition of CDK4/CDK6 activity"/>
</dbReference>
<dbReference type="BioGRID-ORCS" id="12445">
    <property type="hits" value="12 hits in 81 CRISPR screens"/>
</dbReference>
<dbReference type="ChiTaRS" id="Ccnd3">
    <property type="organism name" value="mouse"/>
</dbReference>
<dbReference type="PRO" id="PR:P30282"/>
<dbReference type="Proteomes" id="UP000000589">
    <property type="component" value="Chromosome 17"/>
</dbReference>
<dbReference type="RNAct" id="P30282">
    <property type="molecule type" value="protein"/>
</dbReference>
<dbReference type="Bgee" id="ENSMUSG00000034165">
    <property type="expression patterns" value="Expressed in granulocyte and 270 other cell types or tissues"/>
</dbReference>
<dbReference type="ExpressionAtlas" id="P30282">
    <property type="expression patterns" value="baseline and differential"/>
</dbReference>
<dbReference type="GO" id="GO:0097130">
    <property type="term" value="C:cyclin D3-CDK4 complex"/>
    <property type="evidence" value="ECO:0000266"/>
    <property type="project" value="ComplexPortal"/>
</dbReference>
<dbReference type="GO" id="GO:0097133">
    <property type="term" value="C:cyclin D3-CDK6 complex"/>
    <property type="evidence" value="ECO:0007669"/>
    <property type="project" value="Ensembl"/>
</dbReference>
<dbReference type="GO" id="GO:0005737">
    <property type="term" value="C:cytoplasm"/>
    <property type="evidence" value="ECO:0007669"/>
    <property type="project" value="UniProtKB-SubCell"/>
</dbReference>
<dbReference type="GO" id="GO:0005654">
    <property type="term" value="C:nucleoplasm"/>
    <property type="evidence" value="ECO:0007669"/>
    <property type="project" value="Ensembl"/>
</dbReference>
<dbReference type="GO" id="GO:0005634">
    <property type="term" value="C:nucleus"/>
    <property type="evidence" value="ECO:0000314"/>
    <property type="project" value="MGI"/>
</dbReference>
<dbReference type="GO" id="GO:0061575">
    <property type="term" value="F:cyclin-dependent protein serine/threonine kinase activator activity"/>
    <property type="evidence" value="ECO:0007669"/>
    <property type="project" value="Ensembl"/>
</dbReference>
<dbReference type="GO" id="GO:0004693">
    <property type="term" value="F:cyclin-dependent protein serine/threonine kinase activity"/>
    <property type="evidence" value="ECO:0000314"/>
    <property type="project" value="MGI"/>
</dbReference>
<dbReference type="GO" id="GO:0019901">
    <property type="term" value="F:protein kinase binding"/>
    <property type="evidence" value="ECO:0000353"/>
    <property type="project" value="MGI"/>
</dbReference>
<dbReference type="GO" id="GO:0051301">
    <property type="term" value="P:cell division"/>
    <property type="evidence" value="ECO:0007669"/>
    <property type="project" value="UniProtKB-KW"/>
</dbReference>
<dbReference type="GO" id="GO:0000082">
    <property type="term" value="P:G1/S transition of mitotic cell cycle"/>
    <property type="evidence" value="ECO:0000303"/>
    <property type="project" value="ComplexPortal"/>
</dbReference>
<dbReference type="GO" id="GO:0000122">
    <property type="term" value="P:negative regulation of transcription by RNA polymerase II"/>
    <property type="evidence" value="ECO:0000314"/>
    <property type="project" value="MGI"/>
</dbReference>
<dbReference type="GO" id="GO:0051726">
    <property type="term" value="P:regulation of cell cycle"/>
    <property type="evidence" value="ECO:0000314"/>
    <property type="project" value="MGI"/>
</dbReference>
<dbReference type="GO" id="GO:0042127">
    <property type="term" value="P:regulation of cell population proliferation"/>
    <property type="evidence" value="ECO:0000315"/>
    <property type="project" value="MGI"/>
</dbReference>
<dbReference type="GO" id="GO:0007165">
    <property type="term" value="P:signal transduction"/>
    <property type="evidence" value="ECO:0000314"/>
    <property type="project" value="MGI"/>
</dbReference>
<dbReference type="GO" id="GO:0042098">
    <property type="term" value="P:T cell proliferation"/>
    <property type="evidence" value="ECO:0000315"/>
    <property type="project" value="MGI"/>
</dbReference>
<dbReference type="FunFam" id="1.10.472.10:FF:000012">
    <property type="entry name" value="G1/S-specific cyclin-D1"/>
    <property type="match status" value="1"/>
</dbReference>
<dbReference type="FunFam" id="1.10.472.10:FF:000096">
    <property type="entry name" value="G1/S-specific cyclin-D3 isoform X2"/>
    <property type="match status" value="1"/>
</dbReference>
<dbReference type="Gene3D" id="1.10.472.10">
    <property type="entry name" value="Cyclin-like"/>
    <property type="match status" value="2"/>
</dbReference>
<dbReference type="InterPro" id="IPR039361">
    <property type="entry name" value="Cyclin"/>
</dbReference>
<dbReference type="InterPro" id="IPR013763">
    <property type="entry name" value="Cyclin-like_dom"/>
</dbReference>
<dbReference type="InterPro" id="IPR036915">
    <property type="entry name" value="Cyclin-like_sf"/>
</dbReference>
<dbReference type="InterPro" id="IPR004367">
    <property type="entry name" value="Cyclin_C-dom"/>
</dbReference>
<dbReference type="InterPro" id="IPR006671">
    <property type="entry name" value="Cyclin_N"/>
</dbReference>
<dbReference type="InterPro" id="IPR048258">
    <property type="entry name" value="Cyclins_cyclin-box"/>
</dbReference>
<dbReference type="PANTHER" id="PTHR10177">
    <property type="entry name" value="CYCLINS"/>
    <property type="match status" value="1"/>
</dbReference>
<dbReference type="Pfam" id="PF02984">
    <property type="entry name" value="Cyclin_C"/>
    <property type="match status" value="1"/>
</dbReference>
<dbReference type="Pfam" id="PF00134">
    <property type="entry name" value="Cyclin_N"/>
    <property type="match status" value="1"/>
</dbReference>
<dbReference type="SMART" id="SM00385">
    <property type="entry name" value="CYCLIN"/>
    <property type="match status" value="1"/>
</dbReference>
<dbReference type="SMART" id="SM01332">
    <property type="entry name" value="Cyclin_C"/>
    <property type="match status" value="1"/>
</dbReference>
<dbReference type="SUPFAM" id="SSF47954">
    <property type="entry name" value="Cyclin-like"/>
    <property type="match status" value="2"/>
</dbReference>
<dbReference type="PROSITE" id="PS00292">
    <property type="entry name" value="CYCLINS"/>
    <property type="match status" value="1"/>
</dbReference>
<organism>
    <name type="scientific">Mus musculus</name>
    <name type="common">Mouse</name>
    <dbReference type="NCBI Taxonomy" id="10090"/>
    <lineage>
        <taxon>Eukaryota</taxon>
        <taxon>Metazoa</taxon>
        <taxon>Chordata</taxon>
        <taxon>Craniata</taxon>
        <taxon>Vertebrata</taxon>
        <taxon>Euteleostomi</taxon>
        <taxon>Mammalia</taxon>
        <taxon>Eutheria</taxon>
        <taxon>Euarchontoglires</taxon>
        <taxon>Glires</taxon>
        <taxon>Rodentia</taxon>
        <taxon>Myomorpha</taxon>
        <taxon>Muroidea</taxon>
        <taxon>Muridae</taxon>
        <taxon>Murinae</taxon>
        <taxon>Mus</taxon>
        <taxon>Mus</taxon>
    </lineage>
</organism>
<accession>P30282</accession>
<accession>Q62391</accession>
<accession>Q99KP2</accession>
<keyword id="KW-0131">Cell cycle</keyword>
<keyword id="KW-0132">Cell division</keyword>
<keyword id="KW-0195">Cyclin</keyword>
<keyword id="KW-0963">Cytoplasm</keyword>
<keyword id="KW-0539">Nucleus</keyword>
<keyword id="KW-0597">Phosphoprotein</keyword>
<keyword id="KW-1185">Reference proteome</keyword>
<keyword id="KW-0804">Transcription</keyword>
<keyword id="KW-0805">Transcription regulation</keyword>
<keyword id="KW-0832">Ubl conjugation</keyword>
<proteinExistence type="evidence at protein level"/>
<feature type="chain" id="PRO_0000080443" description="G1/S-specific cyclin-D3">
    <location>
        <begin position="1"/>
        <end position="292"/>
    </location>
</feature>
<feature type="domain" description="Cyclin N-terminal">
    <location>
        <begin position="27"/>
        <end position="152"/>
    </location>
</feature>
<feature type="region of interest" description="Disordered" evidence="3">
    <location>
        <begin position="256"/>
        <end position="292"/>
    </location>
</feature>
<feature type="compositionally biased region" description="Low complexity" evidence="3">
    <location>
        <begin position="272"/>
        <end position="285"/>
    </location>
</feature>
<feature type="modified residue" description="Phosphoserine" evidence="10">
    <location>
        <position position="264"/>
    </location>
</feature>
<feature type="modified residue" description="Phosphoserine" evidence="2">
    <location>
        <position position="279"/>
    </location>
</feature>
<feature type="modified residue" description="Phosphothreonine" evidence="1">
    <location>
        <position position="283"/>
    </location>
</feature>
<feature type="sequence conflict" description="In Ref. 3; AAH04076." evidence="8" ref="3">
    <original>C</original>
    <variation>Y</variation>
    <location>
        <position position="239"/>
    </location>
</feature>
<gene>
    <name evidence="7 9" type="primary">Ccnd3</name>
    <name evidence="6" type="synonym">Cyl-3</name>
</gene>
<evidence type="ECO:0000250" key="1">
    <source>
        <dbReference type="UniProtKB" id="P24385"/>
    </source>
</evidence>
<evidence type="ECO:0000250" key="2">
    <source>
        <dbReference type="UniProtKB" id="P30281"/>
    </source>
</evidence>
<evidence type="ECO:0000256" key="3">
    <source>
        <dbReference type="SAM" id="MobiDB-lite"/>
    </source>
</evidence>
<evidence type="ECO:0000269" key="4">
    <source>
    </source>
</evidence>
<evidence type="ECO:0000269" key="5">
    <source>
    </source>
</evidence>
<evidence type="ECO:0000303" key="6">
    <source>
    </source>
</evidence>
<evidence type="ECO:0000303" key="7">
    <source>
    </source>
</evidence>
<evidence type="ECO:0000305" key="8"/>
<evidence type="ECO:0000312" key="9">
    <source>
        <dbReference type="MGI" id="MGI:88315"/>
    </source>
</evidence>
<evidence type="ECO:0007744" key="10">
    <source>
    </source>
</evidence>
<sequence length="292" mass="32411">MELLCCEGTRHAPRAGPDPRLLGDQRVLQSLLRLEERYVPRASYFQCVQKEIKPHMRKMLAYWMLEVCEEQRCEEDVFPLAMNYLDRYLSCVPTRKAQLQLLGTVCLLLASKLRETTPLTIEKLCIYTDQAVAPWQLREWEVLVLGKLKWDLAAVIAHDFLALILHRLSLPSDRQALVKKHAQTFLALCATDYTFAMYPPSMIATGSIGAAVLGLGACSMSADELTELLAGITGTEVDCLRACQEQIEAALRESLREAAQTAPSPVPKAPRGSSSQGPSQTSTPTDVTAIHL</sequence>
<name>CCND3_MOUSE</name>